<feature type="chain" id="PRO_0000363270" description="Putative protein phosphatase 2C 24">
    <location>
        <begin position="1"/>
        <end position="315"/>
    </location>
</feature>
<feature type="domain" description="PPM-type phosphatase" evidence="2">
    <location>
        <begin position="71"/>
        <end position="314"/>
    </location>
</feature>
<feature type="binding site" evidence="1">
    <location>
        <position position="102"/>
    </location>
    <ligand>
        <name>Mn(2+)</name>
        <dbReference type="ChEBI" id="CHEBI:29035"/>
        <label>1</label>
    </ligand>
</feature>
<feature type="binding site" evidence="1">
    <location>
        <position position="102"/>
    </location>
    <ligand>
        <name>Mn(2+)</name>
        <dbReference type="ChEBI" id="CHEBI:29035"/>
        <label>2</label>
    </ligand>
</feature>
<feature type="binding site" evidence="1">
    <location>
        <position position="103"/>
    </location>
    <ligand>
        <name>Mn(2+)</name>
        <dbReference type="ChEBI" id="CHEBI:29035"/>
        <label>1</label>
    </ligand>
</feature>
<feature type="binding site" evidence="1">
    <location>
        <position position="238"/>
    </location>
    <ligand>
        <name>Mn(2+)</name>
        <dbReference type="ChEBI" id="CHEBI:29035"/>
        <label>2</label>
    </ligand>
</feature>
<feature type="binding site" evidence="1">
    <location>
        <position position="305"/>
    </location>
    <ligand>
        <name>Mn(2+)</name>
        <dbReference type="ChEBI" id="CHEBI:29035"/>
        <label>2</label>
    </ligand>
</feature>
<proteinExistence type="inferred from homology"/>
<evidence type="ECO:0000250" key="1"/>
<evidence type="ECO:0000255" key="2">
    <source>
        <dbReference type="PROSITE-ProRule" id="PRU01082"/>
    </source>
</evidence>
<evidence type="ECO:0000305" key="3"/>
<protein>
    <recommendedName>
        <fullName>Putative protein phosphatase 2C 24</fullName>
        <shortName>OsPP2C24</shortName>
        <ecNumber>3.1.3.16</ecNumber>
    </recommendedName>
</protein>
<sequence>MEALPQIRQTLSEIDRRIPDALRVAMGLRLRPTAGAALEEVTRIAASCLPRPCPEGGDDPMECDEAAPARALRMEAASCFLPDHDEDTHFVRPEAGVVALADGVGGYRAPGVDAAAFARALMYNAFEMVVATTPGGAGGICPYALLGWAYEQAVSARTQGASTAVILSLAGATLKYAYIGDSAFAVFRDGKLFFRSEAQVHSFNYPFQLSVKNGNSVTSAARGGVEVKEGDVVVAGTDGLFDNVTSEELQRIVAMGRALGLSPKQTADVVAGFAYEASTTMGRDTPFSLESRKKQGTIFRRGKRDDITVVVAYIV</sequence>
<dbReference type="EC" id="3.1.3.16"/>
<dbReference type="EMBL" id="AP004192">
    <property type="protein sequence ID" value="BAD25306.1"/>
    <property type="molecule type" value="Genomic_DNA"/>
</dbReference>
<dbReference type="EMBL" id="AP014958">
    <property type="protein sequence ID" value="BAS79926.1"/>
    <property type="molecule type" value="Genomic_DNA"/>
</dbReference>
<dbReference type="SMR" id="Q6H7J3"/>
<dbReference type="FunCoup" id="Q6H7J3">
    <property type="interactions" value="1"/>
</dbReference>
<dbReference type="STRING" id="39947.Q6H7J3"/>
<dbReference type="PaxDb" id="39947-Q6H7J3"/>
<dbReference type="EnsemblPlants" id="Os02t0633900-00">
    <property type="protein sequence ID" value="Os02t0633900-00"/>
    <property type="gene ID" value="Os02g0633900"/>
</dbReference>
<dbReference type="Gramene" id="Os02t0633900-00">
    <property type="protein sequence ID" value="Os02t0633900-00"/>
    <property type="gene ID" value="Os02g0633900"/>
</dbReference>
<dbReference type="eggNOG" id="KOG1379">
    <property type="taxonomic scope" value="Eukaryota"/>
</dbReference>
<dbReference type="HOGENOM" id="CLU_029404_3_1_1"/>
<dbReference type="InParanoid" id="Q6H7J3"/>
<dbReference type="OMA" id="DSWFVSS"/>
<dbReference type="OrthoDB" id="681748at2759"/>
<dbReference type="Proteomes" id="UP000000763">
    <property type="component" value="Chromosome 2"/>
</dbReference>
<dbReference type="Proteomes" id="UP000059680">
    <property type="component" value="Chromosome 2"/>
</dbReference>
<dbReference type="GO" id="GO:0046872">
    <property type="term" value="F:metal ion binding"/>
    <property type="evidence" value="ECO:0007669"/>
    <property type="project" value="UniProtKB-KW"/>
</dbReference>
<dbReference type="GO" id="GO:0004722">
    <property type="term" value="F:protein serine/threonine phosphatase activity"/>
    <property type="evidence" value="ECO:0000318"/>
    <property type="project" value="GO_Central"/>
</dbReference>
<dbReference type="Gene3D" id="3.60.40.10">
    <property type="entry name" value="PPM-type phosphatase domain"/>
    <property type="match status" value="1"/>
</dbReference>
<dbReference type="InterPro" id="IPR036457">
    <property type="entry name" value="PPM-type-like_dom_sf"/>
</dbReference>
<dbReference type="InterPro" id="IPR001932">
    <property type="entry name" value="PPM-type_phosphatase-like_dom"/>
</dbReference>
<dbReference type="InterPro" id="IPR039123">
    <property type="entry name" value="PPTC7"/>
</dbReference>
<dbReference type="PANTHER" id="PTHR12320">
    <property type="entry name" value="PROTEIN PHOSPHATASE 2C"/>
    <property type="match status" value="1"/>
</dbReference>
<dbReference type="PANTHER" id="PTHR12320:SF87">
    <property type="entry name" value="PROTEIN PHOSPHATASE 2C 24-RELATED"/>
    <property type="match status" value="1"/>
</dbReference>
<dbReference type="SMART" id="SM00331">
    <property type="entry name" value="PP2C_SIG"/>
    <property type="match status" value="1"/>
</dbReference>
<dbReference type="SMART" id="SM00332">
    <property type="entry name" value="PP2Cc"/>
    <property type="match status" value="1"/>
</dbReference>
<dbReference type="SUPFAM" id="SSF81606">
    <property type="entry name" value="PP2C-like"/>
    <property type="match status" value="1"/>
</dbReference>
<dbReference type="PROSITE" id="PS51746">
    <property type="entry name" value="PPM_2"/>
    <property type="match status" value="1"/>
</dbReference>
<keyword id="KW-0378">Hydrolase</keyword>
<keyword id="KW-0460">Magnesium</keyword>
<keyword id="KW-0464">Manganese</keyword>
<keyword id="KW-0479">Metal-binding</keyword>
<keyword id="KW-0904">Protein phosphatase</keyword>
<keyword id="KW-1185">Reference proteome</keyword>
<organism>
    <name type="scientific">Oryza sativa subsp. japonica</name>
    <name type="common">Rice</name>
    <dbReference type="NCBI Taxonomy" id="39947"/>
    <lineage>
        <taxon>Eukaryota</taxon>
        <taxon>Viridiplantae</taxon>
        <taxon>Streptophyta</taxon>
        <taxon>Embryophyta</taxon>
        <taxon>Tracheophyta</taxon>
        <taxon>Spermatophyta</taxon>
        <taxon>Magnoliopsida</taxon>
        <taxon>Liliopsida</taxon>
        <taxon>Poales</taxon>
        <taxon>Poaceae</taxon>
        <taxon>BOP clade</taxon>
        <taxon>Oryzoideae</taxon>
        <taxon>Oryzeae</taxon>
        <taxon>Oryzinae</taxon>
        <taxon>Oryza</taxon>
        <taxon>Oryza sativa</taxon>
    </lineage>
</organism>
<comment type="catalytic activity">
    <reaction>
        <text>O-phospho-L-seryl-[protein] + H2O = L-seryl-[protein] + phosphate</text>
        <dbReference type="Rhea" id="RHEA:20629"/>
        <dbReference type="Rhea" id="RHEA-COMP:9863"/>
        <dbReference type="Rhea" id="RHEA-COMP:11604"/>
        <dbReference type="ChEBI" id="CHEBI:15377"/>
        <dbReference type="ChEBI" id="CHEBI:29999"/>
        <dbReference type="ChEBI" id="CHEBI:43474"/>
        <dbReference type="ChEBI" id="CHEBI:83421"/>
        <dbReference type="EC" id="3.1.3.16"/>
    </reaction>
</comment>
<comment type="catalytic activity">
    <reaction>
        <text>O-phospho-L-threonyl-[protein] + H2O = L-threonyl-[protein] + phosphate</text>
        <dbReference type="Rhea" id="RHEA:47004"/>
        <dbReference type="Rhea" id="RHEA-COMP:11060"/>
        <dbReference type="Rhea" id="RHEA-COMP:11605"/>
        <dbReference type="ChEBI" id="CHEBI:15377"/>
        <dbReference type="ChEBI" id="CHEBI:30013"/>
        <dbReference type="ChEBI" id="CHEBI:43474"/>
        <dbReference type="ChEBI" id="CHEBI:61977"/>
        <dbReference type="EC" id="3.1.3.16"/>
    </reaction>
</comment>
<comment type="cofactor">
    <cofactor evidence="1">
        <name>Mg(2+)</name>
        <dbReference type="ChEBI" id="CHEBI:18420"/>
    </cofactor>
    <cofactor evidence="1">
        <name>Mn(2+)</name>
        <dbReference type="ChEBI" id="CHEBI:29035"/>
    </cofactor>
    <text evidence="1">Binds 2 magnesium or manganese ions per subunit.</text>
</comment>
<comment type="similarity">
    <text evidence="3">Belongs to the PP2C family.</text>
</comment>
<gene>
    <name type="ordered locus">Os02g0633900</name>
    <name type="ordered locus">LOC_Os02g42270</name>
    <name type="ORF">OJ1643_A10.23</name>
</gene>
<name>P2C24_ORYSJ</name>
<reference key="1">
    <citation type="journal article" date="2005" name="Nature">
        <title>The map-based sequence of the rice genome.</title>
        <authorList>
            <consortium name="International rice genome sequencing project (IRGSP)"/>
        </authorList>
    </citation>
    <scope>NUCLEOTIDE SEQUENCE [LARGE SCALE GENOMIC DNA]</scope>
    <source>
        <strain>cv. Nipponbare</strain>
    </source>
</reference>
<reference key="2">
    <citation type="journal article" date="2013" name="Rice">
        <title>Improvement of the Oryza sativa Nipponbare reference genome using next generation sequence and optical map data.</title>
        <authorList>
            <person name="Kawahara Y."/>
            <person name="de la Bastide M."/>
            <person name="Hamilton J.P."/>
            <person name="Kanamori H."/>
            <person name="McCombie W.R."/>
            <person name="Ouyang S."/>
            <person name="Schwartz D.C."/>
            <person name="Tanaka T."/>
            <person name="Wu J."/>
            <person name="Zhou S."/>
            <person name="Childs K.L."/>
            <person name="Davidson R.M."/>
            <person name="Lin H."/>
            <person name="Quesada-Ocampo L."/>
            <person name="Vaillancourt B."/>
            <person name="Sakai H."/>
            <person name="Lee S.S."/>
            <person name="Kim J."/>
            <person name="Numa H."/>
            <person name="Itoh T."/>
            <person name="Buell C.R."/>
            <person name="Matsumoto T."/>
        </authorList>
    </citation>
    <scope>GENOME REANNOTATION</scope>
    <source>
        <strain>cv. Nipponbare</strain>
    </source>
</reference>
<reference key="3">
    <citation type="journal article" date="2008" name="BMC Genomics">
        <title>Genome-wide and expression analysis of protein phosphatase 2C in rice and Arabidopsis.</title>
        <authorList>
            <person name="Xue T."/>
            <person name="Wang D."/>
            <person name="Zhang S."/>
            <person name="Ehlting J."/>
            <person name="Ni F."/>
            <person name="Jacab S."/>
            <person name="Zheng C."/>
            <person name="Zhong Y."/>
        </authorList>
    </citation>
    <scope>GENE FAMILY</scope>
    <scope>NOMENCLATURE</scope>
</reference>
<accession>Q6H7J3</accession>
<accession>A0A0P0VM03</accession>